<feature type="chain" id="PRO_0000351716" description="Ribosome maturation factor RimM">
    <location>
        <begin position="1"/>
        <end position="196"/>
    </location>
</feature>
<feature type="domain" description="PRC barrel" evidence="1">
    <location>
        <begin position="118"/>
        <end position="196"/>
    </location>
</feature>
<accession>Q0VRF1</accession>
<gene>
    <name evidence="1" type="primary">rimM</name>
    <name type="ordered locus">ABO_0799</name>
</gene>
<name>RIMM_ALCBS</name>
<sequence>MAERGQSSSAEGGASSQLVVVGRILGVHGVKGWVKVYSYTDPMVNLQQYQPWHLKQGALNSGGSSAAGTWKPVKVTGFRPQGKGLIAQLEGVSDREAAAALVGQDIGVPADLLPQSGQGEYYWRDLIGLRVKHVNGMDLGSVTRMVETGANDVVVVRGDRNSLDRRERLIPWLPEDVITAISLEDGEMTVDWDPDF</sequence>
<evidence type="ECO:0000255" key="1">
    <source>
        <dbReference type="HAMAP-Rule" id="MF_00014"/>
    </source>
</evidence>
<dbReference type="EMBL" id="AM286690">
    <property type="protein sequence ID" value="CAL16247.1"/>
    <property type="molecule type" value="Genomic_DNA"/>
</dbReference>
<dbReference type="RefSeq" id="WP_011588083.1">
    <property type="nucleotide sequence ID" value="NC_008260.1"/>
</dbReference>
<dbReference type="SMR" id="Q0VRF1"/>
<dbReference type="STRING" id="393595.ABO_0799"/>
<dbReference type="KEGG" id="abo:ABO_0799"/>
<dbReference type="eggNOG" id="COG0806">
    <property type="taxonomic scope" value="Bacteria"/>
</dbReference>
<dbReference type="HOGENOM" id="CLU_077636_1_0_6"/>
<dbReference type="OrthoDB" id="9783509at2"/>
<dbReference type="Proteomes" id="UP000008871">
    <property type="component" value="Chromosome"/>
</dbReference>
<dbReference type="GO" id="GO:0005737">
    <property type="term" value="C:cytoplasm"/>
    <property type="evidence" value="ECO:0007669"/>
    <property type="project" value="UniProtKB-SubCell"/>
</dbReference>
<dbReference type="GO" id="GO:0005840">
    <property type="term" value="C:ribosome"/>
    <property type="evidence" value="ECO:0007669"/>
    <property type="project" value="InterPro"/>
</dbReference>
<dbReference type="GO" id="GO:0043022">
    <property type="term" value="F:ribosome binding"/>
    <property type="evidence" value="ECO:0007669"/>
    <property type="project" value="InterPro"/>
</dbReference>
<dbReference type="GO" id="GO:0042274">
    <property type="term" value="P:ribosomal small subunit biogenesis"/>
    <property type="evidence" value="ECO:0007669"/>
    <property type="project" value="UniProtKB-UniRule"/>
</dbReference>
<dbReference type="GO" id="GO:0006364">
    <property type="term" value="P:rRNA processing"/>
    <property type="evidence" value="ECO:0007669"/>
    <property type="project" value="UniProtKB-UniRule"/>
</dbReference>
<dbReference type="Gene3D" id="2.30.30.240">
    <property type="entry name" value="PRC-barrel domain"/>
    <property type="match status" value="1"/>
</dbReference>
<dbReference type="Gene3D" id="2.40.30.60">
    <property type="entry name" value="RimM"/>
    <property type="match status" value="1"/>
</dbReference>
<dbReference type="HAMAP" id="MF_00014">
    <property type="entry name" value="Ribosome_mat_RimM"/>
    <property type="match status" value="1"/>
</dbReference>
<dbReference type="InterPro" id="IPR027275">
    <property type="entry name" value="PRC-brl_dom"/>
</dbReference>
<dbReference type="InterPro" id="IPR011033">
    <property type="entry name" value="PRC_barrel-like_sf"/>
</dbReference>
<dbReference type="InterPro" id="IPR011961">
    <property type="entry name" value="RimM"/>
</dbReference>
<dbReference type="InterPro" id="IPR002676">
    <property type="entry name" value="RimM_N"/>
</dbReference>
<dbReference type="InterPro" id="IPR036976">
    <property type="entry name" value="RimM_N_sf"/>
</dbReference>
<dbReference type="InterPro" id="IPR009000">
    <property type="entry name" value="Transl_B-barrel_sf"/>
</dbReference>
<dbReference type="NCBIfam" id="TIGR02273">
    <property type="entry name" value="16S_RimM"/>
    <property type="match status" value="1"/>
</dbReference>
<dbReference type="PANTHER" id="PTHR33692">
    <property type="entry name" value="RIBOSOME MATURATION FACTOR RIMM"/>
    <property type="match status" value="1"/>
</dbReference>
<dbReference type="PANTHER" id="PTHR33692:SF1">
    <property type="entry name" value="RIBOSOME MATURATION FACTOR RIMM"/>
    <property type="match status" value="1"/>
</dbReference>
<dbReference type="Pfam" id="PF05239">
    <property type="entry name" value="PRC"/>
    <property type="match status" value="1"/>
</dbReference>
<dbReference type="Pfam" id="PF01782">
    <property type="entry name" value="RimM"/>
    <property type="match status" value="1"/>
</dbReference>
<dbReference type="SUPFAM" id="SSF50346">
    <property type="entry name" value="PRC-barrel domain"/>
    <property type="match status" value="1"/>
</dbReference>
<dbReference type="SUPFAM" id="SSF50447">
    <property type="entry name" value="Translation proteins"/>
    <property type="match status" value="1"/>
</dbReference>
<reference key="1">
    <citation type="journal article" date="2006" name="Nat. Biotechnol.">
        <title>Genome sequence of the ubiquitous hydrocarbon-degrading marine bacterium Alcanivorax borkumensis.</title>
        <authorList>
            <person name="Schneiker S."/>
            <person name="Martins dos Santos V.A.P."/>
            <person name="Bartels D."/>
            <person name="Bekel T."/>
            <person name="Brecht M."/>
            <person name="Buhrmester J."/>
            <person name="Chernikova T.N."/>
            <person name="Denaro R."/>
            <person name="Ferrer M."/>
            <person name="Gertler C."/>
            <person name="Goesmann A."/>
            <person name="Golyshina O.V."/>
            <person name="Kaminski F."/>
            <person name="Khachane A.N."/>
            <person name="Lang S."/>
            <person name="Linke B."/>
            <person name="McHardy A.C."/>
            <person name="Meyer F."/>
            <person name="Nechitaylo T."/>
            <person name="Puehler A."/>
            <person name="Regenhardt D."/>
            <person name="Rupp O."/>
            <person name="Sabirova J.S."/>
            <person name="Selbitschka W."/>
            <person name="Yakimov M.M."/>
            <person name="Timmis K.N."/>
            <person name="Vorhoelter F.-J."/>
            <person name="Weidner S."/>
            <person name="Kaiser O."/>
            <person name="Golyshin P.N."/>
        </authorList>
    </citation>
    <scope>NUCLEOTIDE SEQUENCE [LARGE SCALE GENOMIC DNA]</scope>
    <source>
        <strain>ATCC 700651 / DSM 11573 / NCIMB 13689 / SK2</strain>
    </source>
</reference>
<keyword id="KW-0143">Chaperone</keyword>
<keyword id="KW-0963">Cytoplasm</keyword>
<keyword id="KW-1185">Reference proteome</keyword>
<keyword id="KW-0690">Ribosome biogenesis</keyword>
<keyword id="KW-0698">rRNA processing</keyword>
<comment type="function">
    <text evidence="1">An accessory protein needed during the final step in the assembly of 30S ribosomal subunit, possibly for assembly of the head region. Essential for efficient processing of 16S rRNA. May be needed both before and after RbfA during the maturation of 16S rRNA. It has affinity for free ribosomal 30S subunits but not for 70S ribosomes.</text>
</comment>
<comment type="subunit">
    <text evidence="1">Binds ribosomal protein uS19.</text>
</comment>
<comment type="subcellular location">
    <subcellularLocation>
        <location evidence="1">Cytoplasm</location>
    </subcellularLocation>
</comment>
<comment type="domain">
    <text evidence="1">The PRC barrel domain binds ribosomal protein uS19.</text>
</comment>
<comment type="similarity">
    <text evidence="1">Belongs to the RimM family.</text>
</comment>
<organism>
    <name type="scientific">Alcanivorax borkumensis (strain ATCC 700651 / DSM 11573 / NCIMB 13689 / SK2)</name>
    <dbReference type="NCBI Taxonomy" id="393595"/>
    <lineage>
        <taxon>Bacteria</taxon>
        <taxon>Pseudomonadati</taxon>
        <taxon>Pseudomonadota</taxon>
        <taxon>Gammaproteobacteria</taxon>
        <taxon>Oceanospirillales</taxon>
        <taxon>Alcanivoracaceae</taxon>
        <taxon>Alcanivorax</taxon>
    </lineage>
</organism>
<protein>
    <recommendedName>
        <fullName evidence="1">Ribosome maturation factor RimM</fullName>
    </recommendedName>
</protein>
<proteinExistence type="inferred from homology"/>